<geneLocation type="chloroplast"/>
<evidence type="ECO:0000250" key="1">
    <source>
        <dbReference type="UniProtKB" id="P56785"/>
    </source>
</evidence>
<evidence type="ECO:0000255" key="2"/>
<evidence type="ECO:0000256" key="3">
    <source>
        <dbReference type="SAM" id="MobiDB-lite"/>
    </source>
</evidence>
<evidence type="ECO:0000305" key="4"/>
<reference key="1">
    <citation type="journal article" date="2007" name="Mol. Phylogenet. Evol.">
        <title>Phylogenetic and evolutionary implications of complete chloroplast genome sequences of four early-diverging angiosperms: Buxus (Buxaceae), Chloranthus (Chloranthaceae), Dioscorea (Dioscoreaceae), and Illicium (Schisandraceae).</title>
        <authorList>
            <person name="Hansen D.R."/>
            <person name="Dastidar S.G."/>
            <person name="Cai Z."/>
            <person name="Penaflor C."/>
            <person name="Kuehl J.V."/>
            <person name="Boore J.L."/>
            <person name="Jansen R.K."/>
        </authorList>
    </citation>
    <scope>NUCLEOTIDE SEQUENCE [LARGE SCALE GENOMIC DNA]</scope>
</reference>
<dbReference type="EMBL" id="EF380351">
    <property type="protein sequence ID" value="ABQ45308.1"/>
    <property type="molecule type" value="Genomic_DNA"/>
</dbReference>
<dbReference type="EMBL" id="EF380351">
    <property type="protein sequence ID" value="ABQ45296.1"/>
    <property type="molecule type" value="Genomic_DNA"/>
</dbReference>
<dbReference type="GO" id="GO:0009706">
    <property type="term" value="C:chloroplast inner membrane"/>
    <property type="evidence" value="ECO:0007669"/>
    <property type="project" value="UniProtKB-SubCell"/>
</dbReference>
<dbReference type="GO" id="GO:0015031">
    <property type="term" value="P:protein transport"/>
    <property type="evidence" value="ECO:0007669"/>
    <property type="project" value="UniProtKB-KW"/>
</dbReference>
<dbReference type="InterPro" id="IPR008896">
    <property type="entry name" value="TIC214"/>
</dbReference>
<dbReference type="PANTHER" id="PTHR33163:SF40">
    <property type="entry name" value="PROTEIN TIC 214"/>
    <property type="match status" value="1"/>
</dbReference>
<dbReference type="PANTHER" id="PTHR33163">
    <property type="entry name" value="PROTEIN TIC 214-RELATED"/>
    <property type="match status" value="1"/>
</dbReference>
<dbReference type="Pfam" id="PF05758">
    <property type="entry name" value="Ycf1"/>
    <property type="match status" value="1"/>
</dbReference>
<feature type="chain" id="PRO_0000326563" description="Protein TIC 214">
    <location>
        <begin position="1"/>
        <end position="1859"/>
    </location>
</feature>
<feature type="transmembrane region" description="Helical" evidence="2">
    <location>
        <begin position="18"/>
        <end position="38"/>
    </location>
</feature>
<feature type="transmembrane region" description="Helical" evidence="2">
    <location>
        <begin position="64"/>
        <end position="84"/>
    </location>
</feature>
<feature type="transmembrane region" description="Helical" evidence="2">
    <location>
        <begin position="87"/>
        <end position="107"/>
    </location>
</feature>
<feature type="transmembrane region" description="Helical" evidence="2">
    <location>
        <begin position="124"/>
        <end position="144"/>
    </location>
</feature>
<feature type="transmembrane region" description="Helical" evidence="2">
    <location>
        <begin position="172"/>
        <end position="192"/>
    </location>
</feature>
<feature type="transmembrane region" description="Helical" evidence="2">
    <location>
        <begin position="221"/>
        <end position="241"/>
    </location>
</feature>
<feature type="region of interest" description="Disordered" evidence="3">
    <location>
        <begin position="247"/>
        <end position="314"/>
    </location>
</feature>
<feature type="compositionally biased region" description="Acidic residues" evidence="3">
    <location>
        <begin position="256"/>
        <end position="268"/>
    </location>
</feature>
<feature type="compositionally biased region" description="Basic and acidic residues" evidence="3">
    <location>
        <begin position="273"/>
        <end position="284"/>
    </location>
</feature>
<feature type="compositionally biased region" description="Acidic residues" evidence="3">
    <location>
        <begin position="295"/>
        <end position="306"/>
    </location>
</feature>
<feature type="sequence conflict" description="In Ref. 1; ABQ45296." evidence="4" ref="1">
    <original>FY</original>
    <variation>KN</variation>
    <location>
        <begin position="398"/>
        <end position="399"/>
    </location>
</feature>
<name>TI214_BUXMI</name>
<proteinExistence type="inferred from homology"/>
<sequence length="1859" mass="221676">MILKSFLLGNLLSLCMKIINSVVVVGLYYGFLTTFSIGPSYLFLLRARVMEEGTEKKVSATTGFITGQLMMFISIYYAPLHLALGRPHTITVLALPYLLFHFFWNNHKHFFDYGSTTRNSMRNLSIQCVFLNNLIFQLFNHFILPSSTLARLVNIYMFRCNNKMLFVTSSFVGWLIGHILFMKWVGLVLFWIRQNHSIKSNVLIRSNKYLVSELRNSMARIFSILLFITCVYYLGRMPAPIVTKKLKETSKTEERGESEEERDVEIETTSETKGTKQEQERSTEEDPSPSLCSEEKEDPDKIDETEEIRVNGKEKTKDEFKETCYKSRPVYENYYLNGNQENSKLEILKDKEDKDLFWFEKPLVTLLFDYKRWNRPLRYIKNDRFENAVRNEMSQYLFYTCKNDGKQRISFTYPPSLSTFLEMIQRKIYLCTKEKLSSEEMYNHWIYTNEQKKNNLRNEFINRIEALDKEFVSLNVLEKITRLCNDETEQECSPKVYDPLLNGPYRGTITNLYSSSIMNETLIEDSIETLCLCINKIHGILLTDYREFEHKINKFDRKSLSRDIGHLSTSIIEFDGESIPSFNFKALSLLTEDGRIDSEDQAKFSKFLVKEISKRVPRWSYKLIDTLEQEERENEEEVAEDHEIRSRKAKRVVIFNDNGQNTDTHTNTSNDDQGNEVALIRYSQQSDFRRDIIKGSMRAQRRKIVTWKLFQANVHSPLFLDRIDKTFFFSFDISGMMKIIFRNWMVKNTELKISDYEEEEKNKKETEKKNEKKREEKTRILIAETWDSILCAQVIRGSMLVIQSIIRKYIVLPSLIIAKNISRMLLFQFPEWSEDLKDWSREIHVKCTYNGVQLSETEFPKNWLIDGIQIKILFPFCLKPWHRSKLGSHHRDPMKNKRKKNDFCFLTVWGMEAELPFGSPRKRLSFFEPICKELEKKIRKVKKNYFIVLKILKERTKLFIKVSKEKKGWVIKRVLFIKRIIKELNKILFGLREVYDSSENKNRKDYIISNQMIHESSIRIRSMDWTNSLLTEKKMKDLTDRTNTIRKKIERIKRDKKKTFLTSEIKISPNERSCDNKKLESPKNIWQILKRRNTRLIRKWNYFIKFLIERIYIDALPYIINIPRIHGRLFLESKKKIMDKSIYNHEKNQEGIDETNKNTTHFISTIKRPLSNNNNKNSKIFCDLSSLSQAYVFYKLSQTQVINKYNLRSVLQYHGASLFPKERIRYFCGTRGIFNSQSKHKRLRNFGMNEWKNWLRDHYQYDLSQIKWSRLVLQKWRNRVNQRRTVQNKDSKKLGSYEKDQLIHYETEHDYEVYSLPSQKENLKKNYRYDLLSYNYIHYENKKGSYIHVSPLQVTKGREIPYNYNIHKPEFFYVLGGIPISDYLGEDYIIDTEENPDRKYFDWIILNFCLRKKLDIEAWTDIDTGDSINKNTKTGTNNYQIIDKIDKKYLFYLTIHQEINPSNQKKNFFDWMGMNEEILNRTISNLELWFFQEFVLLYNAYKIKPWVIPIKLLLLNFNRNKNVSENKNINKKQKNDLWIPFTEKKSIELENRNQEEKETRGQGDLGSDAQNHGNLGYVLSNQQKDVEEDYAGSNIKKRRKKKQCTSNTEAELNFLLKRYLLFQLRWDDPFNQRMINNIKVYCLLLRLINPKEISISSIQSGEMSPDIIQKDLTITELIKKGLLIIEPVRLSIKRDGQFIMYQTISISLVHKNKQQTNGRCREKRYVDKNYFDESIARHEKMVGTGDENHYELLVPENISSPRRRRELRIRICFNSGNKNFVDRNPVFFNENKVKHCGRFLDENKHLDTDKKKLIKLKCFLWPNYQLEDLACMNRYWFNTNNGSRFSMSRIHMYPRLKIR</sequence>
<keyword id="KW-0150">Chloroplast</keyword>
<keyword id="KW-0472">Membrane</keyword>
<keyword id="KW-0934">Plastid</keyword>
<keyword id="KW-1001">Plastid inner membrane</keyword>
<keyword id="KW-0653">Protein transport</keyword>
<keyword id="KW-0812">Transmembrane</keyword>
<keyword id="KW-1133">Transmembrane helix</keyword>
<keyword id="KW-0813">Transport</keyword>
<accession>A6MM95</accession>
<accession>A6MM83</accession>
<organism>
    <name type="scientific">Buxus microphylla</name>
    <name type="common">Littleleaf boxwood</name>
    <name type="synonym">Japanese boxwood</name>
    <dbReference type="NCBI Taxonomy" id="153571"/>
    <lineage>
        <taxon>Eukaryota</taxon>
        <taxon>Viridiplantae</taxon>
        <taxon>Streptophyta</taxon>
        <taxon>Embryophyta</taxon>
        <taxon>Tracheophyta</taxon>
        <taxon>Spermatophyta</taxon>
        <taxon>Magnoliopsida</taxon>
        <taxon>Buxales</taxon>
        <taxon>Buxaceae</taxon>
        <taxon>Buxus</taxon>
    </lineage>
</organism>
<gene>
    <name evidence="1" type="primary">TIC214</name>
    <name type="synonym">ycf1-A</name>
</gene>
<gene>
    <name evidence="1" type="primary">TIC214</name>
    <name type="synonym">ycf1-B</name>
</gene>
<comment type="function">
    <text evidence="1">Involved in protein precursor import into chloroplasts. May be part of an intermediate translocation complex acting as a protein-conducting channel at the inner envelope.</text>
</comment>
<comment type="subunit">
    <text evidence="1">Part of the Tic complex.</text>
</comment>
<comment type="subcellular location">
    <subcellularLocation>
        <location evidence="1">Plastid</location>
        <location evidence="1">Chloroplast inner membrane</location>
        <topology evidence="2">Multi-pass membrane protein</topology>
    </subcellularLocation>
</comment>
<comment type="miscellaneous">
    <text>There is a partial copy of the N-terminus (positions 1-399) of ycf1 in the inverted repeat (ABQ45296).</text>
</comment>
<comment type="similarity">
    <text evidence="4">Belongs to the TIC214 family.</text>
</comment>
<protein>
    <recommendedName>
        <fullName evidence="1">Protein TIC 214</fullName>
    </recommendedName>
    <alternativeName>
        <fullName evidence="1">Translocon at the inner envelope membrane of chloroplasts 214</fullName>
        <shortName evidence="1">AtTIC214</shortName>
    </alternativeName>
</protein>